<feature type="chain" id="PRO_0000347131" description="Large ribosomal subunit protein uL30">
    <location>
        <begin position="1"/>
        <end position="59"/>
    </location>
</feature>
<comment type="subunit">
    <text evidence="1">Part of the 50S ribosomal subunit.</text>
</comment>
<comment type="similarity">
    <text evidence="1">Belongs to the universal ribosomal protein uL30 family.</text>
</comment>
<name>RL30_STUS1</name>
<reference key="1">
    <citation type="journal article" date="2008" name="Proc. Natl. Acad. Sci. U.S.A.">
        <title>Nitrogen fixation island and rhizosphere competence traits in the genome of root-associated Pseudomonas stutzeri A1501.</title>
        <authorList>
            <person name="Yan Y."/>
            <person name="Yang J."/>
            <person name="Dou Y."/>
            <person name="Chen M."/>
            <person name="Ping S."/>
            <person name="Peng J."/>
            <person name="Lu W."/>
            <person name="Zhang W."/>
            <person name="Yao Z."/>
            <person name="Li H."/>
            <person name="Liu W."/>
            <person name="He S."/>
            <person name="Geng L."/>
            <person name="Zhang X."/>
            <person name="Yang F."/>
            <person name="Yu H."/>
            <person name="Zhan Y."/>
            <person name="Li D."/>
            <person name="Lin Z."/>
            <person name="Wang Y."/>
            <person name="Elmerich C."/>
            <person name="Lin M."/>
            <person name="Jin Q."/>
        </authorList>
    </citation>
    <scope>NUCLEOTIDE SEQUENCE [LARGE SCALE GENOMIC DNA]</scope>
    <source>
        <strain>A1501</strain>
    </source>
</reference>
<sequence>MANTVKVTLIKSVSGRIPNHKLCVKGLGLRRIGHTVEVQDTPENRGMINKAYYMLRVEG</sequence>
<proteinExistence type="inferred from homology"/>
<dbReference type="EMBL" id="CP000304">
    <property type="protein sequence ID" value="ABP78499.1"/>
    <property type="molecule type" value="Genomic_DNA"/>
</dbReference>
<dbReference type="RefSeq" id="WP_003281818.1">
    <property type="nucleotide sequence ID" value="NC_009434.1"/>
</dbReference>
<dbReference type="SMR" id="A4VHP8"/>
<dbReference type="GeneID" id="98636801"/>
<dbReference type="KEGG" id="psa:PST_0802"/>
<dbReference type="eggNOG" id="COG1841">
    <property type="taxonomic scope" value="Bacteria"/>
</dbReference>
<dbReference type="HOGENOM" id="CLU_131047_1_4_6"/>
<dbReference type="Proteomes" id="UP000000233">
    <property type="component" value="Chromosome"/>
</dbReference>
<dbReference type="GO" id="GO:0022625">
    <property type="term" value="C:cytosolic large ribosomal subunit"/>
    <property type="evidence" value="ECO:0007669"/>
    <property type="project" value="TreeGrafter"/>
</dbReference>
<dbReference type="GO" id="GO:0003735">
    <property type="term" value="F:structural constituent of ribosome"/>
    <property type="evidence" value="ECO:0007669"/>
    <property type="project" value="InterPro"/>
</dbReference>
<dbReference type="GO" id="GO:0006412">
    <property type="term" value="P:translation"/>
    <property type="evidence" value="ECO:0007669"/>
    <property type="project" value="UniProtKB-UniRule"/>
</dbReference>
<dbReference type="CDD" id="cd01658">
    <property type="entry name" value="Ribosomal_L30"/>
    <property type="match status" value="1"/>
</dbReference>
<dbReference type="FunFam" id="3.30.1390.20:FF:000001">
    <property type="entry name" value="50S ribosomal protein L30"/>
    <property type="match status" value="1"/>
</dbReference>
<dbReference type="Gene3D" id="3.30.1390.20">
    <property type="entry name" value="Ribosomal protein L30, ferredoxin-like fold domain"/>
    <property type="match status" value="1"/>
</dbReference>
<dbReference type="HAMAP" id="MF_01371_B">
    <property type="entry name" value="Ribosomal_uL30_B"/>
    <property type="match status" value="1"/>
</dbReference>
<dbReference type="InterPro" id="IPR036919">
    <property type="entry name" value="Ribo_uL30_ferredoxin-like_sf"/>
</dbReference>
<dbReference type="InterPro" id="IPR005996">
    <property type="entry name" value="Ribosomal_uL30_bac-type"/>
</dbReference>
<dbReference type="InterPro" id="IPR016082">
    <property type="entry name" value="Ribosomal_uL30_ferredoxin-like"/>
</dbReference>
<dbReference type="NCBIfam" id="TIGR01308">
    <property type="entry name" value="rpmD_bact"/>
    <property type="match status" value="1"/>
</dbReference>
<dbReference type="PANTHER" id="PTHR15892:SF2">
    <property type="entry name" value="LARGE RIBOSOMAL SUBUNIT PROTEIN UL30M"/>
    <property type="match status" value="1"/>
</dbReference>
<dbReference type="PANTHER" id="PTHR15892">
    <property type="entry name" value="MITOCHONDRIAL RIBOSOMAL PROTEIN L30"/>
    <property type="match status" value="1"/>
</dbReference>
<dbReference type="Pfam" id="PF00327">
    <property type="entry name" value="Ribosomal_L30"/>
    <property type="match status" value="1"/>
</dbReference>
<dbReference type="PIRSF" id="PIRSF002211">
    <property type="entry name" value="Ribosomal_L30_bac-type"/>
    <property type="match status" value="1"/>
</dbReference>
<dbReference type="SUPFAM" id="SSF55129">
    <property type="entry name" value="Ribosomal protein L30p/L7e"/>
    <property type="match status" value="1"/>
</dbReference>
<organism>
    <name type="scientific">Stutzerimonas stutzeri (strain A1501)</name>
    <name type="common">Pseudomonas stutzeri</name>
    <dbReference type="NCBI Taxonomy" id="379731"/>
    <lineage>
        <taxon>Bacteria</taxon>
        <taxon>Pseudomonadati</taxon>
        <taxon>Pseudomonadota</taxon>
        <taxon>Gammaproteobacteria</taxon>
        <taxon>Pseudomonadales</taxon>
        <taxon>Pseudomonadaceae</taxon>
        <taxon>Stutzerimonas</taxon>
    </lineage>
</organism>
<gene>
    <name evidence="1" type="primary">rpmD</name>
    <name type="ordered locus">PST_0802</name>
</gene>
<accession>A4VHP8</accession>
<keyword id="KW-1185">Reference proteome</keyword>
<keyword id="KW-0687">Ribonucleoprotein</keyword>
<keyword id="KW-0689">Ribosomal protein</keyword>
<evidence type="ECO:0000255" key="1">
    <source>
        <dbReference type="HAMAP-Rule" id="MF_01371"/>
    </source>
</evidence>
<evidence type="ECO:0000305" key="2"/>
<protein>
    <recommendedName>
        <fullName evidence="1">Large ribosomal subunit protein uL30</fullName>
    </recommendedName>
    <alternativeName>
        <fullName evidence="2">50S ribosomal protein L30</fullName>
    </alternativeName>
</protein>